<feature type="chain" id="PRO_0000117242" description="Methylenetetrahydrofolate--tRNA-(uracil-5-)-methyltransferase TrmFO">
    <location>
        <begin position="1"/>
        <end position="465"/>
    </location>
</feature>
<feature type="binding site" evidence="1">
    <location>
        <begin position="10"/>
        <end position="15"/>
    </location>
    <ligand>
        <name>FAD</name>
        <dbReference type="ChEBI" id="CHEBI:57692"/>
    </ligand>
</feature>
<sequence>MSSPTITVVGAGLAGSEAALAAAKLGVRVRLFEMRPQKMTPAHRTANFAELVCSTSLGGEGEMQSKGLLQAEMRSVGAAIVTSADASRVPAGNALAVDRDAFSAHVTEQVKNHPLIEVVEGEVETVPDGICVIASGPLTADALASDLRRLTGSERLSFYDAAAPVIDVDSIDMDIAWRAGRYDQSADYINCPFTKEEYLAFFEALETARSHTPHDWEKLEFFEGCMPIEEIARRGVDTPRFGPMSPKGLDDPKTGRWPYAVAQLRQEDAEGRMWSLVGFQTGLKWGDQKAVVQLIPGLHNADIVRYGVMHRNTYLNAPEVLDSTLQLRADPQKLVAGVLAGTEGYLESSATGWLAGTNAARLALGLEPLTPPAESMLGGLVRYLASANPKGFQPMNVNWALVPELPTEINEKTGKPKKLGKREKRPPLFRRGLGAFMAWAGQDAGVPVTPPAVPEHPQDELPAIR</sequence>
<keyword id="KW-0963">Cytoplasm</keyword>
<keyword id="KW-0274">FAD</keyword>
<keyword id="KW-0285">Flavoprotein</keyword>
<keyword id="KW-0489">Methyltransferase</keyword>
<keyword id="KW-0520">NAD</keyword>
<keyword id="KW-0521">NADP</keyword>
<keyword id="KW-1185">Reference proteome</keyword>
<keyword id="KW-0808">Transferase</keyword>
<keyword id="KW-0819">tRNA processing</keyword>
<reference key="1">
    <citation type="journal article" date="1999" name="Science">
        <title>Genome sequence of the radioresistant bacterium Deinococcus radiodurans R1.</title>
        <authorList>
            <person name="White O."/>
            <person name="Eisen J.A."/>
            <person name="Heidelberg J.F."/>
            <person name="Hickey E.K."/>
            <person name="Peterson J.D."/>
            <person name="Dodson R.J."/>
            <person name="Haft D.H."/>
            <person name="Gwinn M.L."/>
            <person name="Nelson W.C."/>
            <person name="Richardson D.L."/>
            <person name="Moffat K.S."/>
            <person name="Qin H."/>
            <person name="Jiang L."/>
            <person name="Pamphile W."/>
            <person name="Crosby M."/>
            <person name="Shen M."/>
            <person name="Vamathevan J.J."/>
            <person name="Lam P."/>
            <person name="McDonald L.A."/>
            <person name="Utterback T.R."/>
            <person name="Zalewski C."/>
            <person name="Makarova K.S."/>
            <person name="Aravind L."/>
            <person name="Daly M.J."/>
            <person name="Minton K.W."/>
            <person name="Fleischmann R.D."/>
            <person name="Ketchum K.A."/>
            <person name="Nelson K.E."/>
            <person name="Salzberg S.L."/>
            <person name="Smith H.O."/>
            <person name="Venter J.C."/>
            <person name="Fraser C.M."/>
        </authorList>
    </citation>
    <scope>NUCLEOTIDE SEQUENCE [LARGE SCALE GENOMIC DNA]</scope>
    <source>
        <strain>ATCC 13939 / DSM 20539 / JCM 16871 / CCUG 27074 / LMG 4051 / NBRC 15346 / NCIMB 9279 / VKM B-1422 / R1</strain>
    </source>
</reference>
<gene>
    <name evidence="1" type="primary">trmFO</name>
    <name type="synonym">gid</name>
    <name type="ordered locus">DR_0209</name>
</gene>
<comment type="function">
    <text evidence="1">Catalyzes the folate-dependent formation of 5-methyl-uridine at position 54 (M-5-U54) in all tRNAs.</text>
</comment>
<comment type="catalytic activity">
    <reaction evidence="1">
        <text>uridine(54) in tRNA + (6R)-5,10-methylene-5,6,7,8-tetrahydrofolate + NADH + H(+) = 5-methyluridine(54) in tRNA + (6S)-5,6,7,8-tetrahydrofolate + NAD(+)</text>
        <dbReference type="Rhea" id="RHEA:16873"/>
        <dbReference type="Rhea" id="RHEA-COMP:10167"/>
        <dbReference type="Rhea" id="RHEA-COMP:10193"/>
        <dbReference type="ChEBI" id="CHEBI:15378"/>
        <dbReference type="ChEBI" id="CHEBI:15636"/>
        <dbReference type="ChEBI" id="CHEBI:57453"/>
        <dbReference type="ChEBI" id="CHEBI:57540"/>
        <dbReference type="ChEBI" id="CHEBI:57945"/>
        <dbReference type="ChEBI" id="CHEBI:65315"/>
        <dbReference type="ChEBI" id="CHEBI:74447"/>
        <dbReference type="EC" id="2.1.1.74"/>
    </reaction>
</comment>
<comment type="catalytic activity">
    <reaction evidence="1">
        <text>uridine(54) in tRNA + (6R)-5,10-methylene-5,6,7,8-tetrahydrofolate + NADPH + H(+) = 5-methyluridine(54) in tRNA + (6S)-5,6,7,8-tetrahydrofolate + NADP(+)</text>
        <dbReference type="Rhea" id="RHEA:62372"/>
        <dbReference type="Rhea" id="RHEA-COMP:10167"/>
        <dbReference type="Rhea" id="RHEA-COMP:10193"/>
        <dbReference type="ChEBI" id="CHEBI:15378"/>
        <dbReference type="ChEBI" id="CHEBI:15636"/>
        <dbReference type="ChEBI" id="CHEBI:57453"/>
        <dbReference type="ChEBI" id="CHEBI:57783"/>
        <dbReference type="ChEBI" id="CHEBI:58349"/>
        <dbReference type="ChEBI" id="CHEBI:65315"/>
        <dbReference type="ChEBI" id="CHEBI:74447"/>
        <dbReference type="EC" id="2.1.1.74"/>
    </reaction>
</comment>
<comment type="cofactor">
    <cofactor evidence="1">
        <name>FAD</name>
        <dbReference type="ChEBI" id="CHEBI:57692"/>
    </cofactor>
</comment>
<comment type="subcellular location">
    <subcellularLocation>
        <location evidence="1">Cytoplasm</location>
    </subcellularLocation>
</comment>
<comment type="similarity">
    <text evidence="1">Belongs to the MnmG family. TrmFO subfamily.</text>
</comment>
<comment type="sequence caution" evidence="2">
    <conflict type="erroneous initiation">
        <sequence resource="EMBL-CDS" id="AAF09795"/>
    </conflict>
</comment>
<proteinExistence type="inferred from homology"/>
<name>TRMFO_DEIRA</name>
<organism>
    <name type="scientific">Deinococcus radiodurans (strain ATCC 13939 / DSM 20539 / JCM 16871 / CCUG 27074 / LMG 4051 / NBRC 15346 / NCIMB 9279 / VKM B-1422 / R1)</name>
    <dbReference type="NCBI Taxonomy" id="243230"/>
    <lineage>
        <taxon>Bacteria</taxon>
        <taxon>Thermotogati</taxon>
        <taxon>Deinococcota</taxon>
        <taxon>Deinococci</taxon>
        <taxon>Deinococcales</taxon>
        <taxon>Deinococcaceae</taxon>
        <taxon>Deinococcus</taxon>
    </lineage>
</organism>
<evidence type="ECO:0000255" key="1">
    <source>
        <dbReference type="HAMAP-Rule" id="MF_01037"/>
    </source>
</evidence>
<evidence type="ECO:0000305" key="2"/>
<accession>Q9RXU7</accession>
<dbReference type="EC" id="2.1.1.74" evidence="1"/>
<dbReference type="EMBL" id="AE000513">
    <property type="protein sequence ID" value="AAF09795.1"/>
    <property type="status" value="ALT_INIT"/>
    <property type="molecule type" value="Genomic_DNA"/>
</dbReference>
<dbReference type="PIR" id="D75546">
    <property type="entry name" value="D75546"/>
</dbReference>
<dbReference type="RefSeq" id="NP_293933.1">
    <property type="nucleotide sequence ID" value="NC_001263.1"/>
</dbReference>
<dbReference type="RefSeq" id="WP_034350703.1">
    <property type="nucleotide sequence ID" value="NC_001263.1"/>
</dbReference>
<dbReference type="SMR" id="Q9RXU7"/>
<dbReference type="FunCoup" id="Q9RXU7">
    <property type="interactions" value="11"/>
</dbReference>
<dbReference type="STRING" id="243230.DR_0209"/>
<dbReference type="PaxDb" id="243230-DR_0209"/>
<dbReference type="EnsemblBacteria" id="AAF09795">
    <property type="protein sequence ID" value="AAF09795"/>
    <property type="gene ID" value="DR_0209"/>
</dbReference>
<dbReference type="GeneID" id="69516440"/>
<dbReference type="KEGG" id="dra:DR_0209"/>
<dbReference type="PATRIC" id="fig|243230.17.peg.374"/>
<dbReference type="eggNOG" id="COG1206">
    <property type="taxonomic scope" value="Bacteria"/>
</dbReference>
<dbReference type="HOGENOM" id="CLU_033057_1_0_0"/>
<dbReference type="InParanoid" id="Q9RXU7"/>
<dbReference type="OrthoDB" id="9803114at2"/>
<dbReference type="Proteomes" id="UP000002524">
    <property type="component" value="Chromosome 1"/>
</dbReference>
<dbReference type="GO" id="GO:0005829">
    <property type="term" value="C:cytosol"/>
    <property type="evidence" value="ECO:0000318"/>
    <property type="project" value="GO_Central"/>
</dbReference>
<dbReference type="GO" id="GO:0050660">
    <property type="term" value="F:flavin adenine dinucleotide binding"/>
    <property type="evidence" value="ECO:0000318"/>
    <property type="project" value="GO_Central"/>
</dbReference>
<dbReference type="GO" id="GO:0047151">
    <property type="term" value="F:tRNA (uracil(54)-C5)-methyltransferase activity, 5,10-methylenetetrahydrofolate-dependent"/>
    <property type="evidence" value="ECO:0007669"/>
    <property type="project" value="UniProtKB-UniRule"/>
</dbReference>
<dbReference type="GO" id="GO:0030488">
    <property type="term" value="P:tRNA methylation"/>
    <property type="evidence" value="ECO:0000318"/>
    <property type="project" value="GO_Central"/>
</dbReference>
<dbReference type="GO" id="GO:0002098">
    <property type="term" value="P:tRNA wobble uridine modification"/>
    <property type="evidence" value="ECO:0000318"/>
    <property type="project" value="GO_Central"/>
</dbReference>
<dbReference type="Gene3D" id="3.50.50.60">
    <property type="entry name" value="FAD/NAD(P)-binding domain"/>
    <property type="match status" value="2"/>
</dbReference>
<dbReference type="HAMAP" id="MF_01037">
    <property type="entry name" value="TrmFO"/>
    <property type="match status" value="1"/>
</dbReference>
<dbReference type="InterPro" id="IPR036188">
    <property type="entry name" value="FAD/NAD-bd_sf"/>
</dbReference>
<dbReference type="InterPro" id="IPR002218">
    <property type="entry name" value="MnmG-rel"/>
</dbReference>
<dbReference type="InterPro" id="IPR020595">
    <property type="entry name" value="MnmG-rel_CS"/>
</dbReference>
<dbReference type="InterPro" id="IPR040131">
    <property type="entry name" value="MnmG_N"/>
</dbReference>
<dbReference type="InterPro" id="IPR004417">
    <property type="entry name" value="TrmFO"/>
</dbReference>
<dbReference type="NCBIfam" id="TIGR00137">
    <property type="entry name" value="gid_trmFO"/>
    <property type="match status" value="1"/>
</dbReference>
<dbReference type="NCBIfam" id="NF003739">
    <property type="entry name" value="PRK05335.1"/>
    <property type="match status" value="1"/>
</dbReference>
<dbReference type="PANTHER" id="PTHR11806">
    <property type="entry name" value="GLUCOSE INHIBITED DIVISION PROTEIN A"/>
    <property type="match status" value="1"/>
</dbReference>
<dbReference type="PANTHER" id="PTHR11806:SF2">
    <property type="entry name" value="METHYLENETETRAHYDROFOLATE--TRNA-(URACIL-5-)-METHYLTRANSFERASE TRMFO"/>
    <property type="match status" value="1"/>
</dbReference>
<dbReference type="Pfam" id="PF01134">
    <property type="entry name" value="GIDA"/>
    <property type="match status" value="1"/>
</dbReference>
<dbReference type="PRINTS" id="PR00411">
    <property type="entry name" value="PNDRDTASEI"/>
</dbReference>
<dbReference type="SUPFAM" id="SSF51905">
    <property type="entry name" value="FAD/NAD(P)-binding domain"/>
    <property type="match status" value="1"/>
</dbReference>
<dbReference type="PROSITE" id="PS01281">
    <property type="entry name" value="GIDA_2"/>
    <property type="match status" value="1"/>
</dbReference>
<protein>
    <recommendedName>
        <fullName evidence="1">Methylenetetrahydrofolate--tRNA-(uracil-5-)-methyltransferase TrmFO</fullName>
        <ecNumber evidence="1">2.1.1.74</ecNumber>
    </recommendedName>
    <alternativeName>
        <fullName evidence="1">Folate-dependent tRNA (uracil-5-)-methyltransferase</fullName>
    </alternativeName>
    <alternativeName>
        <fullName evidence="1">Folate-dependent tRNA(M-5-U54)-methyltransferase</fullName>
    </alternativeName>
</protein>